<comment type="function">
    <text evidence="1">Divalent metal cation transporter which exports Zn(2+), Cd(2+) and possibly Fe(2+). May be involved in zinc and iron detoxification by efflux.</text>
</comment>
<comment type="catalytic activity">
    <reaction evidence="1">
        <text>Zn(2+)(in) + H(+)(out) = Zn(2+)(out) + H(+)(in)</text>
        <dbReference type="Rhea" id="RHEA:28839"/>
        <dbReference type="ChEBI" id="CHEBI:15378"/>
        <dbReference type="ChEBI" id="CHEBI:29105"/>
    </reaction>
</comment>
<comment type="catalytic activity">
    <reaction evidence="1">
        <text>Cd(2+)(in) + H(+)(out) = Cd(2+)(out) + H(+)(in)</text>
        <dbReference type="Rhea" id="RHEA:28739"/>
        <dbReference type="ChEBI" id="CHEBI:15378"/>
        <dbReference type="ChEBI" id="CHEBI:48775"/>
    </reaction>
</comment>
<comment type="catalytic activity">
    <reaction evidence="1">
        <text>Fe(2+)(in) + H(+)(out) = Fe(2+)(out) + H(+)(in)</text>
        <dbReference type="Rhea" id="RHEA:29439"/>
        <dbReference type="ChEBI" id="CHEBI:15378"/>
        <dbReference type="ChEBI" id="CHEBI:29033"/>
    </reaction>
</comment>
<comment type="subunit">
    <text evidence="1">Homodimer.</text>
</comment>
<comment type="subcellular location">
    <subcellularLocation>
        <location evidence="1">Cell inner membrane</location>
        <topology evidence="1">Multi-pass membrane protein</topology>
    </subcellularLocation>
</comment>
<comment type="similarity">
    <text evidence="1 2">Belongs to the cation diffusion facilitator (CDF) transporter (TC 2.A.4) family. FieF subfamily.</text>
</comment>
<keyword id="KW-0997">Cell inner membrane</keyword>
<keyword id="KW-1003">Cell membrane</keyword>
<keyword id="KW-0406">Ion transport</keyword>
<keyword id="KW-0408">Iron</keyword>
<keyword id="KW-0410">Iron transport</keyword>
<keyword id="KW-0472">Membrane</keyword>
<keyword id="KW-0479">Metal-binding</keyword>
<keyword id="KW-1185">Reference proteome</keyword>
<keyword id="KW-0812">Transmembrane</keyword>
<keyword id="KW-1133">Transmembrane helix</keyword>
<keyword id="KW-0813">Transport</keyword>
<keyword id="KW-0862">Zinc</keyword>
<keyword id="KW-0864">Zinc transport</keyword>
<name>FIEF_ECO57</name>
<evidence type="ECO:0000255" key="1">
    <source>
        <dbReference type="HAMAP-Rule" id="MF_01425"/>
    </source>
</evidence>
<evidence type="ECO:0000305" key="2"/>
<reference key="1">
    <citation type="journal article" date="2001" name="Nature">
        <title>Genome sequence of enterohaemorrhagic Escherichia coli O157:H7.</title>
        <authorList>
            <person name="Perna N.T."/>
            <person name="Plunkett G. III"/>
            <person name="Burland V."/>
            <person name="Mau B."/>
            <person name="Glasner J.D."/>
            <person name="Rose D.J."/>
            <person name="Mayhew G.F."/>
            <person name="Evans P.S."/>
            <person name="Gregor J."/>
            <person name="Kirkpatrick H.A."/>
            <person name="Posfai G."/>
            <person name="Hackett J."/>
            <person name="Klink S."/>
            <person name="Boutin A."/>
            <person name="Shao Y."/>
            <person name="Miller L."/>
            <person name="Grotbeck E.J."/>
            <person name="Davis N.W."/>
            <person name="Lim A."/>
            <person name="Dimalanta E.T."/>
            <person name="Potamousis K."/>
            <person name="Apodaca J."/>
            <person name="Anantharaman T.S."/>
            <person name="Lin J."/>
            <person name="Yen G."/>
            <person name="Schwartz D.C."/>
            <person name="Welch R.A."/>
            <person name="Blattner F.R."/>
        </authorList>
    </citation>
    <scope>NUCLEOTIDE SEQUENCE [LARGE SCALE GENOMIC DNA]</scope>
    <source>
        <strain>O157:H7 / EDL933 / ATCC 700927 / EHEC</strain>
    </source>
</reference>
<reference key="2">
    <citation type="journal article" date="2001" name="DNA Res.">
        <title>Complete genome sequence of enterohemorrhagic Escherichia coli O157:H7 and genomic comparison with a laboratory strain K-12.</title>
        <authorList>
            <person name="Hayashi T."/>
            <person name="Makino K."/>
            <person name="Ohnishi M."/>
            <person name="Kurokawa K."/>
            <person name="Ishii K."/>
            <person name="Yokoyama K."/>
            <person name="Han C.-G."/>
            <person name="Ohtsubo E."/>
            <person name="Nakayama K."/>
            <person name="Murata T."/>
            <person name="Tanaka M."/>
            <person name="Tobe T."/>
            <person name="Iida T."/>
            <person name="Takami H."/>
            <person name="Honda T."/>
            <person name="Sasakawa C."/>
            <person name="Ogasawara N."/>
            <person name="Yasunaga T."/>
            <person name="Kuhara S."/>
            <person name="Shiba T."/>
            <person name="Hattori M."/>
            <person name="Shinagawa H."/>
        </authorList>
    </citation>
    <scope>NUCLEOTIDE SEQUENCE [LARGE SCALE GENOMIC DNA]</scope>
    <source>
        <strain>O157:H7 / Sakai / RIMD 0509952 / EHEC</strain>
    </source>
</reference>
<organism>
    <name type="scientific">Escherichia coli O157:H7</name>
    <dbReference type="NCBI Taxonomy" id="83334"/>
    <lineage>
        <taxon>Bacteria</taxon>
        <taxon>Pseudomonadati</taxon>
        <taxon>Pseudomonadota</taxon>
        <taxon>Gammaproteobacteria</taxon>
        <taxon>Enterobacterales</taxon>
        <taxon>Enterobacteriaceae</taxon>
        <taxon>Escherichia</taxon>
    </lineage>
</organism>
<gene>
    <name evidence="1" type="primary">fieF</name>
    <name type="ordered locus">Z5459</name>
    <name type="ordered locus">ECs4840</name>
</gene>
<accession>P69381</accession>
<accession>P32159</accession>
<sequence length="300" mass="32927">MNQSYGRLVSRAAIAATAMASLLLLIKIFAWWYTGSVSILAALVDSLVDIGASLTNLLVVRYSLQPADDNHSFGHGKAESLAALAQSMFISGSALFLFLTGIQHLISPTPMTDPGVGVIVTIVALICTIILVSFQRWVVRRTQSQAVRADMLHYQSDVMMNGAILLALGLSWYGWHRADALFALGIGIYILYSALRMGYEAVQSLLDRALPDEERQEIIDIVTSWPGVSGAHDLRTRQSGPTRFIQIHLEMEDSLPLVQAHMVADQVEQAILRRFPGSDVIIHQDPCSVVPREGKRSMLS</sequence>
<proteinExistence type="inferred from homology"/>
<protein>
    <recommendedName>
        <fullName evidence="1">Cation-efflux pump FieF</fullName>
    </recommendedName>
</protein>
<feature type="chain" id="PRO_0000206126" description="Cation-efflux pump FieF">
    <location>
        <begin position="1"/>
        <end position="300"/>
    </location>
</feature>
<feature type="transmembrane region" description="Helical" evidence="1">
    <location>
        <begin position="12"/>
        <end position="32"/>
    </location>
</feature>
<feature type="transmembrane region" description="Helical" evidence="1">
    <location>
        <begin position="39"/>
        <end position="59"/>
    </location>
</feature>
<feature type="transmembrane region" description="Helical" evidence="1">
    <location>
        <begin position="82"/>
        <end position="102"/>
    </location>
</feature>
<feature type="transmembrane region" description="Helical" evidence="1">
    <location>
        <begin position="114"/>
        <end position="134"/>
    </location>
</feature>
<feature type="transmembrane region" description="Helical" evidence="1">
    <location>
        <begin position="156"/>
        <end position="176"/>
    </location>
</feature>
<feature type="transmembrane region" description="Helical" evidence="1">
    <location>
        <begin position="178"/>
        <end position="198"/>
    </location>
</feature>
<feature type="binding site" evidence="1">
    <location>
        <position position="45"/>
    </location>
    <ligand>
        <name>Zn(2+)</name>
        <dbReference type="ChEBI" id="CHEBI:29105"/>
    </ligand>
</feature>
<feature type="binding site" evidence="1">
    <location>
        <position position="49"/>
    </location>
    <ligand>
        <name>Zn(2+)</name>
        <dbReference type="ChEBI" id="CHEBI:29105"/>
    </ligand>
</feature>
<feature type="binding site" evidence="1">
    <location>
        <position position="153"/>
    </location>
    <ligand>
        <name>Zn(2+)</name>
        <dbReference type="ChEBI" id="CHEBI:29105"/>
    </ligand>
</feature>
<feature type="binding site" evidence="1">
    <location>
        <position position="157"/>
    </location>
    <ligand>
        <name>Zn(2+)</name>
        <dbReference type="ChEBI" id="CHEBI:29105"/>
    </ligand>
</feature>
<dbReference type="EMBL" id="AE005174">
    <property type="protein sequence ID" value="AAG59108.1"/>
    <property type="molecule type" value="Genomic_DNA"/>
</dbReference>
<dbReference type="EMBL" id="BA000007">
    <property type="protein sequence ID" value="BAB38263.1"/>
    <property type="molecule type" value="Genomic_DNA"/>
</dbReference>
<dbReference type="PIR" id="H86080">
    <property type="entry name" value="H86080"/>
</dbReference>
<dbReference type="PIR" id="H91233">
    <property type="entry name" value="H91233"/>
</dbReference>
<dbReference type="RefSeq" id="NP_312867.1">
    <property type="nucleotide sequence ID" value="NC_002695.1"/>
</dbReference>
<dbReference type="RefSeq" id="WP_001076742.1">
    <property type="nucleotide sequence ID" value="NZ_VOAI01000016.1"/>
</dbReference>
<dbReference type="SMR" id="P69381"/>
<dbReference type="STRING" id="155864.Z5459"/>
<dbReference type="GeneID" id="75204588"/>
<dbReference type="GeneID" id="915062"/>
<dbReference type="KEGG" id="ece:Z5459"/>
<dbReference type="KEGG" id="ecs:ECs_4840"/>
<dbReference type="PATRIC" id="fig|386585.9.peg.5061"/>
<dbReference type="eggNOG" id="COG0053">
    <property type="taxonomic scope" value="Bacteria"/>
</dbReference>
<dbReference type="HOGENOM" id="CLU_013430_3_0_6"/>
<dbReference type="OMA" id="HDYGPGR"/>
<dbReference type="Proteomes" id="UP000000558">
    <property type="component" value="Chromosome"/>
</dbReference>
<dbReference type="Proteomes" id="UP000002519">
    <property type="component" value="Chromosome"/>
</dbReference>
<dbReference type="GO" id="GO:0005886">
    <property type="term" value="C:plasma membrane"/>
    <property type="evidence" value="ECO:0007669"/>
    <property type="project" value="UniProtKB-SubCell"/>
</dbReference>
<dbReference type="GO" id="GO:0015086">
    <property type="term" value="F:cadmium ion transmembrane transporter activity"/>
    <property type="evidence" value="ECO:0007669"/>
    <property type="project" value="UniProtKB-UniRule"/>
</dbReference>
<dbReference type="GO" id="GO:0015093">
    <property type="term" value="F:ferrous iron transmembrane transporter activity"/>
    <property type="evidence" value="ECO:0007669"/>
    <property type="project" value="TreeGrafter"/>
</dbReference>
<dbReference type="GO" id="GO:0046872">
    <property type="term" value="F:metal ion binding"/>
    <property type="evidence" value="ECO:0007669"/>
    <property type="project" value="UniProtKB-KW"/>
</dbReference>
<dbReference type="GO" id="GO:0015341">
    <property type="term" value="F:zinc efflux antiporter activity"/>
    <property type="evidence" value="ECO:0007669"/>
    <property type="project" value="TreeGrafter"/>
</dbReference>
<dbReference type="GO" id="GO:0006882">
    <property type="term" value="P:intracellular zinc ion homeostasis"/>
    <property type="evidence" value="ECO:0007669"/>
    <property type="project" value="TreeGrafter"/>
</dbReference>
<dbReference type="FunFam" id="1.20.1510.10:FF:000001">
    <property type="entry name" value="Ferrous-iron efflux pump FieF"/>
    <property type="match status" value="1"/>
</dbReference>
<dbReference type="FunFam" id="3.30.70.1350:FF:000002">
    <property type="entry name" value="Ferrous-iron efflux pump FieF"/>
    <property type="match status" value="1"/>
</dbReference>
<dbReference type="Gene3D" id="1.20.1510.10">
    <property type="entry name" value="Cation efflux protein transmembrane domain"/>
    <property type="match status" value="1"/>
</dbReference>
<dbReference type="Gene3D" id="3.30.70.1350">
    <property type="entry name" value="Cation efflux protein, cytoplasmic domain"/>
    <property type="match status" value="1"/>
</dbReference>
<dbReference type="HAMAP" id="MF_01425">
    <property type="entry name" value="Cation_efflux_FieF"/>
    <property type="match status" value="1"/>
</dbReference>
<dbReference type="InterPro" id="IPR002524">
    <property type="entry name" value="Cation_efflux"/>
</dbReference>
<dbReference type="InterPro" id="IPR027470">
    <property type="entry name" value="Cation_efflux_CTD"/>
</dbReference>
<dbReference type="InterPro" id="IPR036837">
    <property type="entry name" value="Cation_efflux_CTD_sf"/>
</dbReference>
<dbReference type="InterPro" id="IPR023783">
    <property type="entry name" value="Cation_efflux_FieF"/>
</dbReference>
<dbReference type="InterPro" id="IPR027469">
    <property type="entry name" value="Cation_efflux_TMD_sf"/>
</dbReference>
<dbReference type="InterPro" id="IPR050291">
    <property type="entry name" value="CDF_Transporter"/>
</dbReference>
<dbReference type="NCBIfam" id="TIGR01297">
    <property type="entry name" value="CDF"/>
    <property type="match status" value="1"/>
</dbReference>
<dbReference type="NCBIfam" id="NF007064">
    <property type="entry name" value="PRK09509.1"/>
    <property type="match status" value="1"/>
</dbReference>
<dbReference type="PANTHER" id="PTHR43840:SF41">
    <property type="entry name" value="CATION-EFFLUX PUMP FIEF"/>
    <property type="match status" value="1"/>
</dbReference>
<dbReference type="PANTHER" id="PTHR43840">
    <property type="entry name" value="MITOCHONDRIAL METAL TRANSPORTER 1-RELATED"/>
    <property type="match status" value="1"/>
</dbReference>
<dbReference type="Pfam" id="PF01545">
    <property type="entry name" value="Cation_efflux"/>
    <property type="match status" value="1"/>
</dbReference>
<dbReference type="Pfam" id="PF16916">
    <property type="entry name" value="ZT_dimer"/>
    <property type="match status" value="1"/>
</dbReference>
<dbReference type="SUPFAM" id="SSF160240">
    <property type="entry name" value="Cation efflux protein cytoplasmic domain-like"/>
    <property type="match status" value="1"/>
</dbReference>
<dbReference type="SUPFAM" id="SSF161111">
    <property type="entry name" value="Cation efflux protein transmembrane domain-like"/>
    <property type="match status" value="1"/>
</dbReference>